<name>PSBA_CYAPA</name>
<organism>
    <name type="scientific">Cyanophora paradoxa</name>
    <dbReference type="NCBI Taxonomy" id="2762"/>
    <lineage>
        <taxon>Eukaryota</taxon>
        <taxon>Glaucocystophyceae</taxon>
        <taxon>Cyanophoraceae</taxon>
        <taxon>Cyanophora</taxon>
    </lineage>
</organism>
<reference key="1">
    <citation type="journal article" date="1989" name="Curr. Genet.">
        <title>Evolutionary relationship of psbA genes from cyanobacteria, cyanelles and plastids.</title>
        <authorList>
            <person name="Janssen I."/>
            <person name="Jakowitsch J."/>
            <person name="Michalowski C.B."/>
            <person name="Bohnert H.J."/>
            <person name="Loeffelhardt W."/>
        </authorList>
    </citation>
    <scope>NUCLEOTIDE SEQUENCE [GENOMIC DNA]</scope>
    <source>
        <strain>UTEX LB 555 / Pringsheim</strain>
    </source>
</reference>
<reference key="2">
    <citation type="journal article" date="1995" name="Plant Mol. Biol. Rep.">
        <title>Nucleotide sequence of the cyanelle DNA from Cyanophora paradoxa.</title>
        <authorList>
            <person name="Stirewalt V.L."/>
            <person name="Michalowski C.B."/>
            <person name="Loeffelhardt W."/>
            <person name="Bohnert H.J."/>
            <person name="Bryant D.A."/>
        </authorList>
    </citation>
    <scope>NUCLEOTIDE SEQUENCE [LARGE SCALE GENOMIC DNA]</scope>
    <source>
        <strain>UTEX LB 555 / Pringsheim</strain>
    </source>
</reference>
<reference key="3">
    <citation type="book" date="1997" name="Eukaryotism and symbiosis">
        <title>The complete sequence of the cyanelle genome of Cyanophora paradoxa: the genetic complexity of a primitive plastid.</title>
        <editorList>
            <person name="Schenk H.E.A."/>
            <person name="Herrmann R."/>
            <person name="Jeon K.W."/>
            <person name="Mueller N.E."/>
            <person name="Schwemmler W."/>
        </editorList>
        <authorList>
            <person name="Loeffelhardt W."/>
            <person name="Stirewalt V.L."/>
            <person name="Michalowski C.B."/>
            <person name="Annarella M."/>
            <person name="Farley J.Y."/>
            <person name="Schluchter W.M."/>
            <person name="Chung S."/>
            <person name="Newmann-Spallart C."/>
            <person name="Steiner J.M."/>
            <person name="Jakowitsch J."/>
            <person name="Bohnert H.J."/>
            <person name="Bryant D.A."/>
        </authorList>
    </citation>
    <scope>NUCLEOTIDE SEQUENCE [LARGE SCALE GENOMIC DNA]</scope>
    <source>
        <strain>UTEX LB 555 / Pringsheim</strain>
    </source>
</reference>
<gene>
    <name evidence="1" type="primary">psbA</name>
</gene>
<geneLocation type="cyanelle"/>
<evidence type="ECO:0000255" key="1">
    <source>
        <dbReference type="HAMAP-Rule" id="MF_01379"/>
    </source>
</evidence>
<evidence type="ECO:0000305" key="2"/>
<dbReference type="EC" id="1.10.3.9" evidence="1"/>
<dbReference type="EMBL" id="X14667">
    <property type="protein sequence ID" value="CAA32795.1"/>
    <property type="molecule type" value="Genomic_DNA"/>
</dbReference>
<dbReference type="EMBL" id="U30821">
    <property type="protein sequence ID" value="AAA81269.1"/>
    <property type="molecule type" value="Genomic_DNA"/>
</dbReference>
<dbReference type="PIR" id="S05961">
    <property type="entry name" value="F2KTD1"/>
</dbReference>
<dbReference type="RefSeq" id="NP_043238.1">
    <property type="nucleotide sequence ID" value="NC_001675.1"/>
</dbReference>
<dbReference type="SMR" id="P12719"/>
<dbReference type="GeneID" id="801510"/>
<dbReference type="GO" id="GO:0009535">
    <property type="term" value="C:chloroplast thylakoid membrane"/>
    <property type="evidence" value="ECO:0007669"/>
    <property type="project" value="TreeGrafter"/>
</dbReference>
<dbReference type="GO" id="GO:0033115">
    <property type="term" value="C:cyanelle thylakoid membrane"/>
    <property type="evidence" value="ECO:0007669"/>
    <property type="project" value="UniProtKB-SubCell"/>
</dbReference>
<dbReference type="GO" id="GO:0009523">
    <property type="term" value="C:photosystem II"/>
    <property type="evidence" value="ECO:0007669"/>
    <property type="project" value="UniProtKB-KW"/>
</dbReference>
<dbReference type="GO" id="GO:0016168">
    <property type="term" value="F:chlorophyll binding"/>
    <property type="evidence" value="ECO:0007669"/>
    <property type="project" value="UniProtKB-UniRule"/>
</dbReference>
<dbReference type="GO" id="GO:0045156">
    <property type="term" value="F:electron transporter, transferring electrons within the cyclic electron transport pathway of photosynthesis activity"/>
    <property type="evidence" value="ECO:0007669"/>
    <property type="project" value="InterPro"/>
</dbReference>
<dbReference type="GO" id="GO:0005506">
    <property type="term" value="F:iron ion binding"/>
    <property type="evidence" value="ECO:0007669"/>
    <property type="project" value="UniProtKB-UniRule"/>
</dbReference>
<dbReference type="GO" id="GO:0016682">
    <property type="term" value="F:oxidoreductase activity, acting on diphenols and related substances as donors, oxygen as acceptor"/>
    <property type="evidence" value="ECO:0007669"/>
    <property type="project" value="UniProtKB-UniRule"/>
</dbReference>
<dbReference type="GO" id="GO:0009772">
    <property type="term" value="P:photosynthetic electron transport in photosystem II"/>
    <property type="evidence" value="ECO:0007669"/>
    <property type="project" value="InterPro"/>
</dbReference>
<dbReference type="GO" id="GO:0009635">
    <property type="term" value="P:response to herbicide"/>
    <property type="evidence" value="ECO:0007669"/>
    <property type="project" value="UniProtKB-KW"/>
</dbReference>
<dbReference type="CDD" id="cd09289">
    <property type="entry name" value="Photosystem-II_D1"/>
    <property type="match status" value="1"/>
</dbReference>
<dbReference type="FunFam" id="1.20.85.10:FF:000002">
    <property type="entry name" value="Photosystem II protein D1"/>
    <property type="match status" value="1"/>
</dbReference>
<dbReference type="Gene3D" id="1.20.85.10">
    <property type="entry name" value="Photosystem II protein D1-like"/>
    <property type="match status" value="1"/>
</dbReference>
<dbReference type="HAMAP" id="MF_01379">
    <property type="entry name" value="PSII_PsbA_D1"/>
    <property type="match status" value="1"/>
</dbReference>
<dbReference type="InterPro" id="IPR055266">
    <property type="entry name" value="D1/D2"/>
</dbReference>
<dbReference type="InterPro" id="IPR036854">
    <property type="entry name" value="Photo_II_D1/D2_sf"/>
</dbReference>
<dbReference type="InterPro" id="IPR000484">
    <property type="entry name" value="Photo_RC_L/M"/>
</dbReference>
<dbReference type="InterPro" id="IPR055265">
    <property type="entry name" value="Photo_RC_L/M_CS"/>
</dbReference>
<dbReference type="InterPro" id="IPR005867">
    <property type="entry name" value="PSII_D1"/>
</dbReference>
<dbReference type="NCBIfam" id="TIGR01151">
    <property type="entry name" value="psbA"/>
    <property type="match status" value="1"/>
</dbReference>
<dbReference type="PANTHER" id="PTHR33149:SF12">
    <property type="entry name" value="PHOTOSYSTEM II D2 PROTEIN"/>
    <property type="match status" value="1"/>
</dbReference>
<dbReference type="PANTHER" id="PTHR33149">
    <property type="entry name" value="PHOTOSYSTEM II PROTEIN D1"/>
    <property type="match status" value="1"/>
</dbReference>
<dbReference type="Pfam" id="PF00124">
    <property type="entry name" value="Photo_RC"/>
    <property type="match status" value="1"/>
</dbReference>
<dbReference type="PRINTS" id="PR00256">
    <property type="entry name" value="REACTNCENTRE"/>
</dbReference>
<dbReference type="SUPFAM" id="SSF81483">
    <property type="entry name" value="Bacterial photosystem II reaction centre, L and M subunits"/>
    <property type="match status" value="1"/>
</dbReference>
<dbReference type="PROSITE" id="PS00244">
    <property type="entry name" value="REACTION_CENTER"/>
    <property type="match status" value="1"/>
</dbReference>
<accession>P12719</accession>
<comment type="function">
    <text evidence="1">Photosystem II (PSII) is a light-driven water:plastoquinone oxidoreductase that uses light energy to abstract electrons from H(2)O, generating O(2) and a proton gradient subsequently used for ATP formation. It consists of a core antenna complex that captures photons, and an electron transfer chain that converts photonic excitation into a charge separation. The D1/D2 (PsbA/PsbD) reaction center heterodimer binds P680, the primary electron donor of PSII as well as several subsequent electron acceptors.</text>
</comment>
<comment type="catalytic activity">
    <reaction evidence="1">
        <text>2 a plastoquinone + 4 hnu + 2 H2O = 2 a plastoquinol + O2</text>
        <dbReference type="Rhea" id="RHEA:36359"/>
        <dbReference type="Rhea" id="RHEA-COMP:9561"/>
        <dbReference type="Rhea" id="RHEA-COMP:9562"/>
        <dbReference type="ChEBI" id="CHEBI:15377"/>
        <dbReference type="ChEBI" id="CHEBI:15379"/>
        <dbReference type="ChEBI" id="CHEBI:17757"/>
        <dbReference type="ChEBI" id="CHEBI:30212"/>
        <dbReference type="ChEBI" id="CHEBI:62192"/>
        <dbReference type="EC" id="1.10.3.9"/>
    </reaction>
</comment>
<comment type="cofactor">
    <text evidence="1">The D1/D2 heterodimer binds P680, chlorophylls that are the primary electron donor of PSII, and subsequent electron acceptors. It shares a non-heme iron and each subunit binds pheophytin, quinone, additional chlorophylls, carotenoids and lipids. D1 provides most of the ligands for the Mn4-Ca-O5 cluster of the oxygen-evolving complex (OEC). There is also a Cl(-1) ion associated with D1 and D2, which is required for oxygen evolution. The PSII complex binds additional chlorophylls, carotenoids and specific lipids.</text>
</comment>
<comment type="subunit">
    <text evidence="1">PSII is composed of 1 copy each of membrane proteins PsbA, PsbB, PsbC, PsbD, PsbE, PsbF, PsbH, PsbI, PsbJ, PsbK, PsbL, PsbM, PsbT, PsbX, PsbY, PsbZ, Psb30/Ycf12, at least 3 peripheral proteins of the oxygen-evolving complex and a large number of cofactors. It forms dimeric complexes.</text>
</comment>
<comment type="subcellular location">
    <subcellularLocation>
        <location evidence="1">Plastid</location>
        <location evidence="1">Cyanelle thylakoid membrane</location>
        <topology evidence="1">Multi-pass membrane protein</topology>
    </subcellularLocation>
</comment>
<comment type="PTM">
    <text evidence="1">Tyr-161 forms a radical intermediate that is referred to as redox-active TyrZ, YZ or Y-Z.</text>
</comment>
<comment type="PTM">
    <text evidence="1">C-terminally processed by CTPA; processing is essential to allow assembly of the oxygen-evolving complex and thus photosynthetic growth.</text>
</comment>
<comment type="miscellaneous">
    <text evidence="1">2 of the reaction center chlorophylls (ChlD1 and ChlD2) are entirely coordinated by water.</text>
</comment>
<comment type="miscellaneous">
    <text evidence="1">Herbicides such as atrazine, BNT, diuron or ioxynil bind in the Q(B) binding site and block subsequent electron transfer.</text>
</comment>
<comment type="similarity">
    <text evidence="1">Belongs to the reaction center PufL/M/PsbA/D family.</text>
</comment>
<proteinExistence type="inferred from homology"/>
<feature type="chain" id="PRO_0000090437" description="Photosystem II protein D1" evidence="1">
    <location>
        <begin position="1"/>
        <end position="344"/>
    </location>
</feature>
<feature type="propeptide" id="PRO_0000316502" evidence="1">
    <location>
        <begin position="345"/>
        <end position="360"/>
    </location>
</feature>
<feature type="transmembrane region" description="Helical" evidence="1">
    <location>
        <begin position="29"/>
        <end position="46"/>
    </location>
</feature>
<feature type="transmembrane region" description="Helical" evidence="1">
    <location>
        <begin position="118"/>
        <end position="133"/>
    </location>
</feature>
<feature type="transmembrane region" description="Helical" evidence="1">
    <location>
        <begin position="142"/>
        <end position="156"/>
    </location>
</feature>
<feature type="transmembrane region" description="Helical" evidence="1">
    <location>
        <begin position="197"/>
        <end position="218"/>
    </location>
</feature>
<feature type="transmembrane region" description="Helical" evidence="1">
    <location>
        <begin position="274"/>
        <end position="288"/>
    </location>
</feature>
<feature type="binding site" description="axial binding residue" evidence="1">
    <location>
        <position position="118"/>
    </location>
    <ligand>
        <name>chlorophyll a</name>
        <dbReference type="ChEBI" id="CHEBI:58416"/>
        <label>ChlzD1</label>
    </ligand>
    <ligandPart>
        <name>Mg</name>
        <dbReference type="ChEBI" id="CHEBI:25107"/>
    </ligandPart>
</feature>
<feature type="binding site" evidence="1">
    <location>
        <position position="126"/>
    </location>
    <ligand>
        <name>pheophytin a</name>
        <dbReference type="ChEBI" id="CHEBI:136840"/>
        <label>D1</label>
    </ligand>
</feature>
<feature type="binding site" evidence="1">
    <location>
        <position position="170"/>
    </location>
    <ligand>
        <name>[CaMn4O5] cluster</name>
        <dbReference type="ChEBI" id="CHEBI:189552"/>
    </ligand>
</feature>
<feature type="binding site" evidence="1">
    <location>
        <position position="189"/>
    </location>
    <ligand>
        <name>[CaMn4O5] cluster</name>
        <dbReference type="ChEBI" id="CHEBI:189552"/>
    </ligand>
</feature>
<feature type="binding site" description="axial binding residue" evidence="1">
    <location>
        <position position="198"/>
    </location>
    <ligand>
        <name>chlorophyll a</name>
        <dbReference type="ChEBI" id="CHEBI:58416"/>
        <label>PD1</label>
    </ligand>
    <ligandPart>
        <name>Mg</name>
        <dbReference type="ChEBI" id="CHEBI:25107"/>
    </ligandPart>
</feature>
<feature type="binding site" evidence="1">
    <location>
        <position position="215"/>
    </location>
    <ligand>
        <name>a quinone</name>
        <dbReference type="ChEBI" id="CHEBI:132124"/>
        <label>B</label>
    </ligand>
</feature>
<feature type="binding site" evidence="1">
    <location>
        <position position="215"/>
    </location>
    <ligand>
        <name>Fe cation</name>
        <dbReference type="ChEBI" id="CHEBI:24875"/>
        <note>ligand shared with heterodimeric partner</note>
    </ligand>
</feature>
<feature type="binding site" evidence="1">
    <location>
        <begin position="264"/>
        <end position="265"/>
    </location>
    <ligand>
        <name>a quinone</name>
        <dbReference type="ChEBI" id="CHEBI:132124"/>
        <label>B</label>
    </ligand>
</feature>
<feature type="binding site" evidence="1">
    <location>
        <position position="272"/>
    </location>
    <ligand>
        <name>Fe cation</name>
        <dbReference type="ChEBI" id="CHEBI:24875"/>
        <note>ligand shared with heterodimeric partner</note>
    </ligand>
</feature>
<feature type="binding site" evidence="1">
    <location>
        <position position="332"/>
    </location>
    <ligand>
        <name>[CaMn4O5] cluster</name>
        <dbReference type="ChEBI" id="CHEBI:189552"/>
    </ligand>
</feature>
<feature type="binding site" evidence="1">
    <location>
        <position position="333"/>
    </location>
    <ligand>
        <name>[CaMn4O5] cluster</name>
        <dbReference type="ChEBI" id="CHEBI:189552"/>
    </ligand>
</feature>
<feature type="binding site" evidence="1">
    <location>
        <position position="342"/>
    </location>
    <ligand>
        <name>[CaMn4O5] cluster</name>
        <dbReference type="ChEBI" id="CHEBI:189552"/>
    </ligand>
</feature>
<feature type="binding site" evidence="1">
    <location>
        <position position="344"/>
    </location>
    <ligand>
        <name>[CaMn4O5] cluster</name>
        <dbReference type="ChEBI" id="CHEBI:189552"/>
    </ligand>
</feature>
<feature type="site" description="Tyrosine radical intermediate" evidence="1">
    <location>
        <position position="161"/>
    </location>
</feature>
<feature type="site" description="Stabilizes free radical intermediate" evidence="1">
    <location>
        <position position="190"/>
    </location>
</feature>
<feature type="site" description="Cleavage; by CTPA" evidence="1">
    <location>
        <begin position="344"/>
        <end position="345"/>
    </location>
</feature>
<feature type="sequence conflict" description="In Ref. 1; CAA32795." evidence="2" ref="1">
    <original>A</original>
    <variation>L</variation>
    <location>
        <position position="233"/>
    </location>
</feature>
<protein>
    <recommendedName>
        <fullName evidence="1">Photosystem II protein D1</fullName>
        <shortName evidence="1">PSII D1 protein</shortName>
        <ecNumber evidence="1">1.10.3.9</ecNumber>
    </recommendedName>
    <alternativeName>
        <fullName evidence="1">Photosystem II Q(B) protein</fullName>
    </alternativeName>
</protein>
<keyword id="KW-0106">Calcium</keyword>
<keyword id="KW-0148">Chlorophyll</keyword>
<keyword id="KW-0157">Chromophore</keyword>
<keyword id="KW-0194">Cyanelle</keyword>
<keyword id="KW-0249">Electron transport</keyword>
<keyword id="KW-0359">Herbicide resistance</keyword>
<keyword id="KW-0408">Iron</keyword>
<keyword id="KW-0460">Magnesium</keyword>
<keyword id="KW-0464">Manganese</keyword>
<keyword id="KW-0472">Membrane</keyword>
<keyword id="KW-0479">Metal-binding</keyword>
<keyword id="KW-0560">Oxidoreductase</keyword>
<keyword id="KW-0602">Photosynthesis</keyword>
<keyword id="KW-0604">Photosystem II</keyword>
<keyword id="KW-0934">Plastid</keyword>
<keyword id="KW-0793">Thylakoid</keyword>
<keyword id="KW-0812">Transmembrane</keyword>
<keyword id="KW-1133">Transmembrane helix</keyword>
<keyword id="KW-0813">Transport</keyword>
<sequence length="360" mass="39486">MTATLERNASVSLWEQFCGFITSTENRLYIGWFGVLMFPLLLTATTLFIIAFVAAPPVDIDGIREPVAGSLFYGNNIISGAVIPSSAAIGMHFYPIWEAASLDEWLYNGGPYQFVVMHFLLGVACYMGREWELSFRLGMRPWIAVAYSAPVAAATAVFLIYPIGQGSFSDGMPLGISGTFNFMLVFQAEHNILMHPFHMMGVAGVFGGSLFSAMHGSLVTSSLIRETTENESANAGYKFGQEEETYNIVAAHGYFGRLIFQYASFNNSRSLHFFLALWPVVGIWFTALGLSTMAFNLNGLNFNQSVVDSQGRVISTWADIINRANLGMEVMHERNAHNFPLDLASGEVMPVALTAPSINA</sequence>